<dbReference type="EC" id="3.4.24.67"/>
<dbReference type="EMBL" id="M96170">
    <property type="protein sequence ID" value="AAA49438.1"/>
    <property type="molecule type" value="mRNA"/>
</dbReference>
<dbReference type="PIR" id="B48826">
    <property type="entry name" value="B48826"/>
</dbReference>
<dbReference type="RefSeq" id="NP_001188427.1">
    <property type="nucleotide sequence ID" value="NM_001201498.1"/>
</dbReference>
<dbReference type="PDB" id="3VTG">
    <property type="method" value="X-ray"/>
    <property type="resolution" value="1.34 A"/>
    <property type="chains" value="A=71-270"/>
</dbReference>
<dbReference type="PDBsum" id="3VTG"/>
<dbReference type="SMR" id="P31580"/>
<dbReference type="FunCoup" id="P31580">
    <property type="interactions" value="185"/>
</dbReference>
<dbReference type="STRING" id="8090.ENSORLP00000018613"/>
<dbReference type="MEROPS" id="M12.007"/>
<dbReference type="GlyCosmos" id="P31580">
    <property type="glycosylation" value="1 site, No reported glycans"/>
</dbReference>
<dbReference type="GeneID" id="100529164"/>
<dbReference type="KEGG" id="ola:100529164"/>
<dbReference type="CTD" id="100529164"/>
<dbReference type="eggNOG" id="KOG3714">
    <property type="taxonomic scope" value="Eukaryota"/>
</dbReference>
<dbReference type="InParanoid" id="P31580"/>
<dbReference type="OrthoDB" id="291007at2759"/>
<dbReference type="EvolutionaryTrace" id="P31580"/>
<dbReference type="Proteomes" id="UP000001038">
    <property type="component" value="Unplaced"/>
</dbReference>
<dbReference type="Proteomes" id="UP000265180">
    <property type="component" value="Chromosome 9"/>
</dbReference>
<dbReference type="Proteomes" id="UP000265200">
    <property type="component" value="Chromosome 9"/>
</dbReference>
<dbReference type="GO" id="GO:0042588">
    <property type="term" value="C:zymogen granule"/>
    <property type="evidence" value="ECO:0007669"/>
    <property type="project" value="UniProtKB-SubCell"/>
</dbReference>
<dbReference type="GO" id="GO:0004222">
    <property type="term" value="F:metalloendopeptidase activity"/>
    <property type="evidence" value="ECO:0000318"/>
    <property type="project" value="GO_Central"/>
</dbReference>
<dbReference type="GO" id="GO:0008270">
    <property type="term" value="F:zinc ion binding"/>
    <property type="evidence" value="ECO:0007669"/>
    <property type="project" value="InterPro"/>
</dbReference>
<dbReference type="GO" id="GO:0006508">
    <property type="term" value="P:proteolysis"/>
    <property type="evidence" value="ECO:0007669"/>
    <property type="project" value="UniProtKB-KW"/>
</dbReference>
<dbReference type="CDD" id="cd04283">
    <property type="entry name" value="ZnMc_hatching_enzyme"/>
    <property type="match status" value="1"/>
</dbReference>
<dbReference type="FunFam" id="3.40.390.10:FF:000040">
    <property type="entry name" value="Metalloendopeptidase"/>
    <property type="match status" value="1"/>
</dbReference>
<dbReference type="Gene3D" id="3.40.390.10">
    <property type="entry name" value="Collagenase (Catalytic Domain)"/>
    <property type="match status" value="1"/>
</dbReference>
<dbReference type="InterPro" id="IPR024079">
    <property type="entry name" value="MetalloPept_cat_dom_sf"/>
</dbReference>
<dbReference type="InterPro" id="IPR001506">
    <property type="entry name" value="Peptidase_M12A"/>
</dbReference>
<dbReference type="InterPro" id="IPR006026">
    <property type="entry name" value="Peptidase_Metallo"/>
</dbReference>
<dbReference type="InterPro" id="IPR034039">
    <property type="entry name" value="ZnMP_hatching_enz"/>
</dbReference>
<dbReference type="PANTHER" id="PTHR10127">
    <property type="entry name" value="DISCOIDIN, CUB, EGF, LAMININ , AND ZINC METALLOPROTEASE DOMAIN CONTAINING"/>
    <property type="match status" value="1"/>
</dbReference>
<dbReference type="PANTHER" id="PTHR10127:SF839">
    <property type="entry name" value="HATCHING ENZYME 1.2-RELATED"/>
    <property type="match status" value="1"/>
</dbReference>
<dbReference type="Pfam" id="PF01400">
    <property type="entry name" value="Astacin"/>
    <property type="match status" value="1"/>
</dbReference>
<dbReference type="PRINTS" id="PR00480">
    <property type="entry name" value="ASTACIN"/>
</dbReference>
<dbReference type="SMART" id="SM00235">
    <property type="entry name" value="ZnMc"/>
    <property type="match status" value="1"/>
</dbReference>
<dbReference type="SUPFAM" id="SSF55486">
    <property type="entry name" value="Metalloproteases ('zincins'), catalytic domain"/>
    <property type="match status" value="1"/>
</dbReference>
<dbReference type="PROSITE" id="PS51864">
    <property type="entry name" value="ASTACIN"/>
    <property type="match status" value="1"/>
</dbReference>
<dbReference type="PROSITE" id="PS00142">
    <property type="entry name" value="ZINC_PROTEASE"/>
    <property type="match status" value="1"/>
</dbReference>
<comment type="function">
    <text evidence="4">Participates in the breakdown of the egg envelope, which is derived from the egg extracellular matrix, at the time of hatching. Thus allowing the newly hatched fish to swim free. HCE binds tightly to the egg envelope while it exerts the choriolytic swelling action.</text>
</comment>
<comment type="catalytic activity">
    <reaction>
        <text>Hydrolysis of the inner layer of fish egg envelope. Also hydrolysis of casein and small molecule substrates such as succinyl-Leu-Leu-Val-Tyr-|-7-(4-methyl)coumarylamide.</text>
        <dbReference type="EC" id="3.4.24.67"/>
    </reaction>
</comment>
<comment type="cofactor">
    <cofactor evidence="2">
        <name>Zn(2+)</name>
        <dbReference type="ChEBI" id="CHEBI:29105"/>
    </cofactor>
    <text evidence="2">Binds 1 zinc ion per subunit.</text>
</comment>
<comment type="subcellular location">
    <subcellularLocation>
        <location evidence="3">Zymogen granule</location>
    </subcellularLocation>
    <text evidence="5">Stored as proenzymes in the zymogen granules.</text>
</comment>
<comment type="developmental stage">
    <text evidence="3">Production of the protein starts in day 2 to day 3 embryos and increases thereafter until hatching.</text>
</comment>
<comment type="miscellaneous">
    <text evidence="4">In medaka the hatching enzyme system is composed of two distinct proteases, the high choriolytic enzyme (HCE), of which there are two isoforms, and the low choriolytic enzyme (LCE).</text>
</comment>
<feature type="signal peptide">
    <location>
        <begin position="1"/>
        <end position="20"/>
    </location>
</feature>
<feature type="propeptide" id="PRO_0000028946" description="Activation peptide" evidence="3">
    <location>
        <begin position="21"/>
        <end position="70"/>
    </location>
</feature>
<feature type="chain" id="PRO_0000028947" description="High choriolytic enzyme 1">
    <location>
        <begin position="71"/>
        <end position="270"/>
    </location>
</feature>
<feature type="domain" description="Peptidase M12A" evidence="2">
    <location>
        <begin position="71"/>
        <end position="270"/>
    </location>
</feature>
<feature type="active site" evidence="2">
    <location>
        <position position="170"/>
    </location>
</feature>
<feature type="binding site" evidence="2">
    <location>
        <position position="169"/>
    </location>
    <ligand>
        <name>Zn(2+)</name>
        <dbReference type="ChEBI" id="CHEBI:29105"/>
        <note>catalytic</note>
    </ligand>
</feature>
<feature type="binding site" evidence="2">
    <location>
        <position position="173"/>
    </location>
    <ligand>
        <name>Zn(2+)</name>
        <dbReference type="ChEBI" id="CHEBI:29105"/>
        <note>catalytic</note>
    </ligand>
</feature>
<feature type="binding site" evidence="2">
    <location>
        <position position="179"/>
    </location>
    <ligand>
        <name>Zn(2+)</name>
        <dbReference type="ChEBI" id="CHEBI:29105"/>
        <note>catalytic</note>
    </ligand>
</feature>
<feature type="glycosylation site" description="N-linked (GlcNAc...) asparagine" evidence="1">
    <location>
        <position position="53"/>
    </location>
</feature>
<feature type="disulfide bond" evidence="2">
    <location>
        <begin position="75"/>
        <end position="80"/>
    </location>
</feature>
<feature type="disulfide bond" evidence="2">
    <location>
        <begin position="120"/>
        <end position="269"/>
    </location>
</feature>
<feature type="disulfide bond" evidence="2">
    <location>
        <begin position="141"/>
        <end position="161"/>
    </location>
</feature>
<feature type="strand" evidence="6">
    <location>
        <begin position="76"/>
        <end position="78"/>
    </location>
</feature>
<feature type="strand" evidence="6">
    <location>
        <begin position="90"/>
        <end position="96"/>
    </location>
</feature>
<feature type="helix" evidence="6">
    <location>
        <begin position="102"/>
        <end position="113"/>
    </location>
</feature>
<feature type="turn" evidence="6">
    <location>
        <begin position="114"/>
        <end position="118"/>
    </location>
</feature>
<feature type="strand" evidence="6">
    <location>
        <begin position="119"/>
        <end position="125"/>
    </location>
</feature>
<feature type="strand" evidence="6">
    <location>
        <begin position="130"/>
        <end position="136"/>
    </location>
</feature>
<feature type="strand" evidence="6">
    <location>
        <begin position="139"/>
        <end position="143"/>
    </location>
</feature>
<feature type="strand" evidence="6">
    <location>
        <begin position="149"/>
        <end position="156"/>
    </location>
</feature>
<feature type="turn" evidence="6">
    <location>
        <begin position="158"/>
        <end position="160"/>
    </location>
</feature>
<feature type="helix" evidence="6">
    <location>
        <begin position="164"/>
        <end position="175"/>
    </location>
</feature>
<feature type="helix" evidence="6">
    <location>
        <begin position="180"/>
        <end position="182"/>
    </location>
</feature>
<feature type="helix" evidence="6">
    <location>
        <begin position="186"/>
        <end position="188"/>
    </location>
</feature>
<feature type="strand" evidence="6">
    <location>
        <begin position="190"/>
        <end position="192"/>
    </location>
</feature>
<feature type="helix" evidence="6">
    <location>
        <begin position="194"/>
        <end position="196"/>
    </location>
</feature>
<feature type="helix" evidence="6">
    <location>
        <begin position="199"/>
        <end position="205"/>
    </location>
</feature>
<feature type="turn" evidence="6">
    <location>
        <begin position="227"/>
        <end position="230"/>
    </location>
</feature>
<feature type="strand" evidence="6">
    <location>
        <begin position="231"/>
        <end position="233"/>
    </location>
</feature>
<feature type="strand" evidence="6">
    <location>
        <begin position="238"/>
        <end position="243"/>
    </location>
</feature>
<feature type="helix" evidence="6">
    <location>
        <begin position="257"/>
        <end position="266"/>
    </location>
</feature>
<evidence type="ECO:0000255" key="1"/>
<evidence type="ECO:0000255" key="2">
    <source>
        <dbReference type="PROSITE-ProRule" id="PRU01211"/>
    </source>
</evidence>
<evidence type="ECO:0000269" key="3">
    <source>
    </source>
</evidence>
<evidence type="ECO:0000303" key="4">
    <source>
    </source>
</evidence>
<evidence type="ECO:0000305" key="5">
    <source>
    </source>
</evidence>
<evidence type="ECO:0007829" key="6">
    <source>
        <dbReference type="PDB" id="3VTG"/>
    </source>
</evidence>
<proteinExistence type="evidence at protein level"/>
<reference key="1">
    <citation type="journal article" date="1992" name="Dev. Biol.">
        <title>Isolation of cDNAs for LCE and HCE, two constituent proteases of the hatching enzyme of Oryzias latipes, and concurrent expression of their mRNAs during development.</title>
        <authorList>
            <person name="Yasumasu S."/>
            <person name="Yamada K."/>
            <person name="Akasaka K."/>
            <person name="Mitsunaga K."/>
            <person name="Iuchi I."/>
            <person name="Shimada H."/>
            <person name="Yamagami K."/>
        </authorList>
    </citation>
    <scope>NUCLEOTIDE SEQUENCE [MRNA]</scope>
    <scope>PROTEIN SEQUENCE OF 71-119 AND 208-223</scope>
    <scope>FUNCTION</scope>
    <scope>SUBCELLULAR LOCATION</scope>
    <scope>DEVELOPMENTAL STAGE</scope>
    <scope>MISCELLANEOUS</scope>
    <source>
        <tissue>Embryo</tissue>
    </source>
</reference>
<name>HCE1_ORYLA</name>
<accession>P31580</accession>
<protein>
    <recommendedName>
        <fullName>High choriolytic enzyme 1</fullName>
        <ecNumber>3.4.24.67</ecNumber>
    </recommendedName>
    <alternativeName>
        <fullName>Choriolysin H 1</fullName>
    </alternativeName>
    <alternativeName>
        <fullName>HCE23</fullName>
    </alternativeName>
    <alternativeName>
        <fullName>Hatching enzyme zinc-protease subunit HCE 1</fullName>
    </alternativeName>
</protein>
<sequence length="270" mass="30392">MNLAPSTCLLLLFLLDIAQALPVWDEEGHEEGHEEGDGDDFVDITTRILTSNNNTDQLLLEGDLVAPTNRNAMKCWSSSCFWKKASNGLVVIPYVISSEYSGGEVATIEGAMRAFNGKTCIRFVRRTNEYDFISVVSKTGCYSELGRKGGQQELSINRGGCMYSGIIQHELNHALGFQHEQTRSDRDSYVRINWENIIPASAYNFNKHDTNNLNTPYDYSSIMHYGRDAFSIAYGRDSITPIPNPNVPIGQRNGMSRWDITRINVLYNCR</sequence>
<organism>
    <name type="scientific">Oryzias latipes</name>
    <name type="common">Japanese rice fish</name>
    <name type="synonym">Japanese killifish</name>
    <dbReference type="NCBI Taxonomy" id="8090"/>
    <lineage>
        <taxon>Eukaryota</taxon>
        <taxon>Metazoa</taxon>
        <taxon>Chordata</taxon>
        <taxon>Craniata</taxon>
        <taxon>Vertebrata</taxon>
        <taxon>Euteleostomi</taxon>
        <taxon>Actinopterygii</taxon>
        <taxon>Neopterygii</taxon>
        <taxon>Teleostei</taxon>
        <taxon>Neoteleostei</taxon>
        <taxon>Acanthomorphata</taxon>
        <taxon>Ovalentaria</taxon>
        <taxon>Atherinomorphae</taxon>
        <taxon>Beloniformes</taxon>
        <taxon>Adrianichthyidae</taxon>
        <taxon>Oryziinae</taxon>
        <taxon>Oryzias</taxon>
    </lineage>
</organism>
<keyword id="KW-0002">3D-structure</keyword>
<keyword id="KW-0968">Cytoplasmic vesicle</keyword>
<keyword id="KW-0903">Direct protein sequencing</keyword>
<keyword id="KW-1015">Disulfide bond</keyword>
<keyword id="KW-0325">Glycoprotein</keyword>
<keyword id="KW-0378">Hydrolase</keyword>
<keyword id="KW-0479">Metal-binding</keyword>
<keyword id="KW-0482">Metalloprotease</keyword>
<keyword id="KW-0645">Protease</keyword>
<keyword id="KW-1185">Reference proteome</keyword>
<keyword id="KW-0732">Signal</keyword>
<keyword id="KW-0862">Zinc</keyword>
<keyword id="KW-0865">Zymogen</keyword>
<gene>
    <name type="primary">hcea</name>
</gene>